<gene>
    <name evidence="9" type="primary">ramA</name>
    <name type="ordered locus">SCO6683</name>
</gene>
<comment type="function">
    <text evidence="7 11">Probably involved in exporting SapB from the cell (Probable). Expression of the ram locus (ramA, ramB and ramR) induces rapid aerial mycelium formation in S.lividans (PubMed:8206859).</text>
</comment>
<comment type="subcellular location">
    <subcellularLocation>
        <location evidence="1">Cell membrane</location>
        <topology evidence="1">Multi-pass membrane protein</topology>
    </subcellularLocation>
</comment>
<comment type="induction">
    <text evidence="5">Probably part of the ramC-ramS-ramA-ramB operon.</text>
</comment>
<comment type="disruption phenotype">
    <text evidence="6">Deletion of the ramC-ramS-ramA-ramB operon on rich medium leads to an initially bald (no aerial hyphae) phenotype; after 4 days develops a substantial aerial mycelium. No expression of SapB, normal expression of chaplins. Wild-type mycelium on minimal medium. A complete chaplin-negative plus ram-negative strain (deletion of ramR or the ramC-ramS-ramA-ramB operon) leads to the complete loss of robust aerial hyphae.</text>
</comment>
<comment type="similarity">
    <text evidence="10">Belongs to the ABC transporter superfamily.</text>
</comment>
<sequence>MSPAAGAPGSGPGRRRLPALDVRRFSPVRKSRPVPPRAPGRALEVLVLLCSVAAAVAAVAQPLALGRTLDLLLRDGDAGWWLPLSAALLLGELLLDSATSLFTGRCNATWTASVRTRALRGLLRTAPEHARPYPPGDIGTRLTLNAADAGGAPAARAALAASLITPLGALVALALVDVWVALCVLTGLPALALLLRSFARDTGATVAAYQRTQSLIASRLLEALEGADTIGAAGTGERERARVLAPLAELAAQGRHMWALHGRALGRSGVLVPLLTLAATAVGGLRLAAGELSVGDLLAVGRYAQLTAGVGAAASLLGAIVRAREARRRTRELERMTATVYGTRRLPPNGPGELRLCGVRVLRGGREVLRADGVRVPGGSTVAVVGRSGAGKSVLAAVAGRLIDPDEGYVLLDGVRLDRLTHEALRTEVAYAFERPVLGEGTIAEAVADGARRSSRERVRQAARAAGADGFVRRLPHGYDTPLPRAPLSGGEHQRLGLARAFAHAGRLLVLDDATSSLDTATEHEVDLALRRSVRPGTRLVVAHRPSVADRADLVLWLEDGQVRAVGTHRELWHTAGYREVFGAGAGAGAGAGAGAGADAGAGADAGPGPDSGAATAVGGSGPGPVRRPEPEEARP</sequence>
<proteinExistence type="evidence at transcript level"/>
<accession>O88039</accession>
<accession>Q53818</accession>
<evidence type="ECO:0000255" key="1"/>
<evidence type="ECO:0000255" key="2">
    <source>
        <dbReference type="PROSITE-ProRule" id="PRU00434"/>
    </source>
</evidence>
<evidence type="ECO:0000255" key="3">
    <source>
        <dbReference type="PROSITE-ProRule" id="PRU00441"/>
    </source>
</evidence>
<evidence type="ECO:0000256" key="4">
    <source>
        <dbReference type="SAM" id="MobiDB-lite"/>
    </source>
</evidence>
<evidence type="ECO:0000269" key="5">
    <source>
    </source>
</evidence>
<evidence type="ECO:0000269" key="6">
    <source>
    </source>
</evidence>
<evidence type="ECO:0000269" key="7">
    <source>
    </source>
</evidence>
<evidence type="ECO:0000303" key="8">
    <source>
    </source>
</evidence>
<evidence type="ECO:0000303" key="9">
    <source>
    </source>
</evidence>
<evidence type="ECO:0000305" key="10"/>
<evidence type="ECO:0000305" key="11">
    <source>
    </source>
</evidence>
<organism>
    <name type="scientific">Streptomyces coelicolor (strain ATCC BAA-471 / A3(2) / M145)</name>
    <dbReference type="NCBI Taxonomy" id="100226"/>
    <lineage>
        <taxon>Bacteria</taxon>
        <taxon>Bacillati</taxon>
        <taxon>Actinomycetota</taxon>
        <taxon>Actinomycetes</taxon>
        <taxon>Kitasatosporales</taxon>
        <taxon>Streptomycetaceae</taxon>
        <taxon>Streptomyces</taxon>
        <taxon>Streptomyces albidoflavus group</taxon>
    </lineage>
</organism>
<name>RAMA_STRCO</name>
<dbReference type="EMBL" id="U03771">
    <property type="protein sequence ID" value="AAA21388.1"/>
    <property type="molecule type" value="Genomic_DNA"/>
</dbReference>
<dbReference type="EMBL" id="AL939128">
    <property type="protein sequence ID" value="CAA19962.1"/>
    <property type="molecule type" value="Genomic_DNA"/>
</dbReference>
<dbReference type="PIR" id="T35182">
    <property type="entry name" value="T35182"/>
</dbReference>
<dbReference type="RefSeq" id="NP_630758.1">
    <property type="nucleotide sequence ID" value="NC_003888.3"/>
</dbReference>
<dbReference type="SMR" id="O88039"/>
<dbReference type="STRING" id="100226.gene:17764341"/>
<dbReference type="PaxDb" id="100226-SCO6683"/>
<dbReference type="KEGG" id="sco:SCO6683"/>
<dbReference type="PATRIC" id="fig|100226.15.peg.6788"/>
<dbReference type="eggNOG" id="COG1132">
    <property type="taxonomic scope" value="Bacteria"/>
</dbReference>
<dbReference type="HOGENOM" id="CLU_000604_84_3_11"/>
<dbReference type="InParanoid" id="O88039"/>
<dbReference type="OrthoDB" id="9806127at2"/>
<dbReference type="Proteomes" id="UP000001973">
    <property type="component" value="Chromosome"/>
</dbReference>
<dbReference type="GO" id="GO:0005886">
    <property type="term" value="C:plasma membrane"/>
    <property type="evidence" value="ECO:0007669"/>
    <property type="project" value="UniProtKB-SubCell"/>
</dbReference>
<dbReference type="GO" id="GO:0140359">
    <property type="term" value="F:ABC-type transporter activity"/>
    <property type="evidence" value="ECO:0007669"/>
    <property type="project" value="InterPro"/>
</dbReference>
<dbReference type="GO" id="GO:0005524">
    <property type="term" value="F:ATP binding"/>
    <property type="evidence" value="ECO:0007669"/>
    <property type="project" value="UniProtKB-KW"/>
</dbReference>
<dbReference type="GO" id="GO:0016887">
    <property type="term" value="F:ATP hydrolysis activity"/>
    <property type="evidence" value="ECO:0007669"/>
    <property type="project" value="InterPro"/>
</dbReference>
<dbReference type="GO" id="GO:0034040">
    <property type="term" value="F:ATPase-coupled lipid transmembrane transporter activity"/>
    <property type="evidence" value="ECO:0000318"/>
    <property type="project" value="GO_Central"/>
</dbReference>
<dbReference type="GO" id="GO:0055085">
    <property type="term" value="P:transmembrane transport"/>
    <property type="evidence" value="ECO:0000318"/>
    <property type="project" value="GO_Central"/>
</dbReference>
<dbReference type="Gene3D" id="1.20.1560.10">
    <property type="entry name" value="ABC transporter type 1, transmembrane domain"/>
    <property type="match status" value="1"/>
</dbReference>
<dbReference type="Gene3D" id="3.40.50.300">
    <property type="entry name" value="P-loop containing nucleotide triphosphate hydrolases"/>
    <property type="match status" value="1"/>
</dbReference>
<dbReference type="InterPro" id="IPR003593">
    <property type="entry name" value="AAA+_ATPase"/>
</dbReference>
<dbReference type="InterPro" id="IPR011527">
    <property type="entry name" value="ABC1_TM_dom"/>
</dbReference>
<dbReference type="InterPro" id="IPR036640">
    <property type="entry name" value="ABC1_TM_sf"/>
</dbReference>
<dbReference type="InterPro" id="IPR003439">
    <property type="entry name" value="ABC_transporter-like_ATP-bd"/>
</dbReference>
<dbReference type="InterPro" id="IPR027417">
    <property type="entry name" value="P-loop_NTPase"/>
</dbReference>
<dbReference type="InterPro" id="IPR039421">
    <property type="entry name" value="Type_1_exporter"/>
</dbReference>
<dbReference type="PANTHER" id="PTHR24221">
    <property type="entry name" value="ATP-BINDING CASSETTE SUB-FAMILY B"/>
    <property type="match status" value="1"/>
</dbReference>
<dbReference type="PANTHER" id="PTHR24221:SF654">
    <property type="entry name" value="ATP-BINDING CASSETTE SUB-FAMILY B MEMBER 6"/>
    <property type="match status" value="1"/>
</dbReference>
<dbReference type="Pfam" id="PF00664">
    <property type="entry name" value="ABC_membrane"/>
    <property type="match status" value="1"/>
</dbReference>
<dbReference type="Pfam" id="PF00005">
    <property type="entry name" value="ABC_tran"/>
    <property type="match status" value="1"/>
</dbReference>
<dbReference type="SMART" id="SM00382">
    <property type="entry name" value="AAA"/>
    <property type="match status" value="1"/>
</dbReference>
<dbReference type="SUPFAM" id="SSF90123">
    <property type="entry name" value="ABC transporter transmembrane region"/>
    <property type="match status" value="1"/>
</dbReference>
<dbReference type="SUPFAM" id="SSF52540">
    <property type="entry name" value="P-loop containing nucleoside triphosphate hydrolases"/>
    <property type="match status" value="1"/>
</dbReference>
<dbReference type="PROSITE" id="PS50929">
    <property type="entry name" value="ABC_TM1F"/>
    <property type="match status" value="1"/>
</dbReference>
<dbReference type="PROSITE" id="PS50893">
    <property type="entry name" value="ABC_TRANSPORTER_2"/>
    <property type="match status" value="1"/>
</dbReference>
<reference key="1">
    <citation type="journal article" date="1994" name="J. Bacteriol.">
        <title>Cloning and analysis of a gene cluster from Streptomyces coelicolor that causes accelerated aerial mycelium formation in Streptomyces lividans.</title>
        <authorList>
            <person name="Ma H."/>
            <person name="Kendall K."/>
        </authorList>
    </citation>
    <scope>NUCLEOTIDE SEQUENCE [GENOMIC DNA]</scope>
    <scope>FUNCTION</scope>
    <source>
        <strain>A3(2) / M130</strain>
    </source>
</reference>
<reference key="2">
    <citation type="journal article" date="2002" name="Nature">
        <title>Complete genome sequence of the model actinomycete Streptomyces coelicolor A3(2).</title>
        <authorList>
            <person name="Bentley S.D."/>
            <person name="Chater K.F."/>
            <person name="Cerdeno-Tarraga A.-M."/>
            <person name="Challis G.L."/>
            <person name="Thomson N.R."/>
            <person name="James K.D."/>
            <person name="Harris D.E."/>
            <person name="Quail M.A."/>
            <person name="Kieser H."/>
            <person name="Harper D."/>
            <person name="Bateman A."/>
            <person name="Brown S."/>
            <person name="Chandra G."/>
            <person name="Chen C.W."/>
            <person name="Collins M."/>
            <person name="Cronin A."/>
            <person name="Fraser A."/>
            <person name="Goble A."/>
            <person name="Hidalgo J."/>
            <person name="Hornsby T."/>
            <person name="Howarth S."/>
            <person name="Huang C.-H."/>
            <person name="Kieser T."/>
            <person name="Larke L."/>
            <person name="Murphy L.D."/>
            <person name="Oliver K."/>
            <person name="O'Neil S."/>
            <person name="Rabbinowitsch E."/>
            <person name="Rajandream M.A."/>
            <person name="Rutherford K.M."/>
            <person name="Rutter S."/>
            <person name="Seeger K."/>
            <person name="Saunders D."/>
            <person name="Sharp S."/>
            <person name="Squares R."/>
            <person name="Squares S."/>
            <person name="Taylor K."/>
            <person name="Warren T."/>
            <person name="Wietzorrek A."/>
            <person name="Woodward J.R."/>
            <person name="Barrell B.G."/>
            <person name="Parkhill J."/>
            <person name="Hopwood D.A."/>
        </authorList>
    </citation>
    <scope>NUCLEOTIDE SEQUENCE [LARGE SCALE GENOMIC DNA]</scope>
    <source>
        <strain>ATCC BAA-471 / A3(2) / M145</strain>
    </source>
</reference>
<reference key="3">
    <citation type="journal article" date="2002" name="Mol. Microbiol.">
        <title>The ramC gene is required for morphogenesis in Streptomyces coelicolor and expressed in a cell type-specific manner under the direct control of RamR.</title>
        <authorList>
            <person name="O'Connor T.J."/>
            <person name="Kanellis P."/>
            <person name="Nodwell J.R."/>
        </authorList>
    </citation>
    <scope>OPERON</scope>
    <source>
        <strain>A3(2) / J1501</strain>
        <strain>ATCC BAA-471 / A3(2) / M145</strain>
    </source>
</reference>
<reference key="4">
    <citation type="journal article" date="2004" name="Proc. Natl. Acad. Sci. U.S.A.">
        <title>The SapB morphogen is a lantibiotic-like peptide derived from the product of the developmental gene ramS in Streptomyces coelicolor.</title>
        <authorList>
            <person name="Kodani S."/>
            <person name="Hudson M.E."/>
            <person name="Durrant M.C."/>
            <person name="Buttner M.J."/>
            <person name="Nodwell J.R."/>
            <person name="Willey J.M."/>
        </authorList>
    </citation>
    <scope>FUNCTION</scope>
    <source>
        <strain>A3(2) / J1501</strain>
    </source>
</reference>
<reference key="5">
    <citation type="journal article" date="2007" name="Mol. Microbiol.">
        <title>SapB and the chaplins: connections between morphogenetic proteins in Streptomyces coelicolor.</title>
        <authorList>
            <person name="Capstick D.S."/>
            <person name="Willey J.M."/>
            <person name="Buttner M.J."/>
            <person name="Elliot M.A."/>
        </authorList>
    </citation>
    <scope>DISRUPTION PHENOTYPE</scope>
    <source>
        <strain>A3(2) / M600</strain>
    </source>
</reference>
<protein>
    <recommendedName>
        <fullName evidence="8">ABC transporter ATP-binding protein RamA</fullName>
    </recommendedName>
</protein>
<keyword id="KW-0067">ATP-binding</keyword>
<keyword id="KW-1003">Cell membrane</keyword>
<keyword id="KW-0472">Membrane</keyword>
<keyword id="KW-0547">Nucleotide-binding</keyword>
<keyword id="KW-1185">Reference proteome</keyword>
<keyword id="KW-0812">Transmembrane</keyword>
<keyword id="KW-1133">Transmembrane helix</keyword>
<keyword id="KW-0813">Transport</keyword>
<feature type="chain" id="PRO_0000445441" description="ABC transporter ATP-binding protein RamA">
    <location>
        <begin position="1"/>
        <end position="636"/>
    </location>
</feature>
<feature type="transmembrane region" description="Helical" evidence="1 3">
    <location>
        <begin position="45"/>
        <end position="65"/>
    </location>
</feature>
<feature type="transmembrane region" description="Helical" evidence="1 3">
    <location>
        <begin position="78"/>
        <end position="98"/>
    </location>
</feature>
<feature type="transmembrane region" description="Helical" evidence="1 3">
    <location>
        <begin position="175"/>
        <end position="195"/>
    </location>
</feature>
<feature type="transmembrane region" description="Helical" evidence="1 3">
    <location>
        <begin position="269"/>
        <end position="289"/>
    </location>
</feature>
<feature type="transmembrane region" description="Helical" evidence="1 3">
    <location>
        <begin position="297"/>
        <end position="317"/>
    </location>
</feature>
<feature type="domain" description="ABC transmembrane type-1" evidence="3">
    <location>
        <begin position="45"/>
        <end position="322"/>
    </location>
</feature>
<feature type="domain" description="ABC transporter" evidence="2">
    <location>
        <begin position="354"/>
        <end position="585"/>
    </location>
</feature>
<feature type="region of interest" description="Disordered" evidence="4">
    <location>
        <begin position="589"/>
        <end position="636"/>
    </location>
</feature>
<feature type="compositionally biased region" description="Gly residues" evidence="4">
    <location>
        <begin position="589"/>
        <end position="606"/>
    </location>
</feature>
<feature type="compositionally biased region" description="Low complexity" evidence="4">
    <location>
        <begin position="607"/>
        <end position="618"/>
    </location>
</feature>
<feature type="compositionally biased region" description="Basic and acidic residues" evidence="4">
    <location>
        <begin position="627"/>
        <end position="636"/>
    </location>
</feature>
<feature type="binding site" evidence="2">
    <location>
        <begin position="386"/>
        <end position="393"/>
    </location>
    <ligand>
        <name>ATP</name>
        <dbReference type="ChEBI" id="CHEBI:30616"/>
    </ligand>
</feature>
<feature type="sequence conflict" description="In Ref. 1; AAA21388." evidence="10" ref="1">
    <original>D</original>
    <variation>G</variation>
    <location>
        <position position="372"/>
    </location>
</feature>